<comment type="similarity">
    <text evidence="2">Belongs to the UDPGP type 1 family.</text>
</comment>
<sequence length="395" mass="44894">MLDKNQLAKYKQDHLCEYEKIMSNNEKEALEEKVASLDLDFIAKLYNDLYINKKTIDDVSAVSEVKYDIKSQMSDDEIKRLEEQGLQAIKEGQFAVLLMAGGQGTRLGYKGPKGSFEIEGVSLFELQANQLKTLNHQSGHTIQWYIMTSDINHEETLAYFEAHSYFGYDQEAIHFFKQDNIVALSEEGKLILNQQGRIMETPNGNGGVFKSLDKAGYLEEMSNNGVKYIFLNNIDNVLVRVLDPLFAGFTVEHDYDITSKTIQPKPGESVGRLVNVDCKDTVLEYSELDPEVANQFNNANIGIHAFKLGFILNAVNRELPYHLAIKNLKQLDENFGVIEQPTLKFELFYFDIFTYGTSFVTLQVPREEEFSPLKNKEGKDSVATATEDLRRMGLI</sequence>
<protein>
    <recommendedName>
        <fullName>Probable uridylyltransferase SACOL2161</fullName>
        <ecNumber>2.7.7.-</ecNumber>
    </recommendedName>
</protein>
<keyword id="KW-0548">Nucleotidyltransferase</keyword>
<keyword id="KW-0808">Transferase</keyword>
<organism>
    <name type="scientific">Staphylococcus aureus (strain COL)</name>
    <dbReference type="NCBI Taxonomy" id="93062"/>
    <lineage>
        <taxon>Bacteria</taxon>
        <taxon>Bacillati</taxon>
        <taxon>Bacillota</taxon>
        <taxon>Bacilli</taxon>
        <taxon>Bacillales</taxon>
        <taxon>Staphylococcaceae</taxon>
        <taxon>Staphylococcus</taxon>
    </lineage>
</organism>
<evidence type="ECO:0000250" key="1">
    <source>
        <dbReference type="UniProtKB" id="Q9M9P3"/>
    </source>
</evidence>
<evidence type="ECO:0000305" key="2"/>
<accession>Q5HE34</accession>
<name>URTF_STAAC</name>
<dbReference type="EC" id="2.7.7.-"/>
<dbReference type="EMBL" id="CP000046">
    <property type="protein sequence ID" value="AAW38468.1"/>
    <property type="molecule type" value="Genomic_DNA"/>
</dbReference>
<dbReference type="RefSeq" id="WP_000884739.1">
    <property type="nucleotide sequence ID" value="NZ_JBGOFO010000014.1"/>
</dbReference>
<dbReference type="SMR" id="Q5HE34"/>
<dbReference type="KEGG" id="sac:SACOL2161"/>
<dbReference type="HOGENOM" id="CLU_025603_1_2_9"/>
<dbReference type="Proteomes" id="UP000000530">
    <property type="component" value="Chromosome"/>
</dbReference>
<dbReference type="GO" id="GO:0070569">
    <property type="term" value="F:uridylyltransferase activity"/>
    <property type="evidence" value="ECO:0007669"/>
    <property type="project" value="InterPro"/>
</dbReference>
<dbReference type="CDD" id="cd04193">
    <property type="entry name" value="UDPGlcNAc_PPase"/>
    <property type="match status" value="1"/>
</dbReference>
<dbReference type="Gene3D" id="3.90.550.10">
    <property type="entry name" value="Spore Coat Polysaccharide Biosynthesis Protein SpsA, Chain A"/>
    <property type="match status" value="1"/>
</dbReference>
<dbReference type="InterPro" id="IPR029044">
    <property type="entry name" value="Nucleotide-diphossugar_trans"/>
</dbReference>
<dbReference type="InterPro" id="IPR039741">
    <property type="entry name" value="UDP-sugar_pyrophosphorylase"/>
</dbReference>
<dbReference type="InterPro" id="IPR002618">
    <property type="entry name" value="UDPGP_fam"/>
</dbReference>
<dbReference type="PANTHER" id="PTHR11952:SF2">
    <property type="entry name" value="LD24639P"/>
    <property type="match status" value="1"/>
</dbReference>
<dbReference type="PANTHER" id="PTHR11952">
    <property type="entry name" value="UDP- GLUCOSE PYROPHOSPHORYLASE"/>
    <property type="match status" value="1"/>
</dbReference>
<dbReference type="Pfam" id="PF01704">
    <property type="entry name" value="UDPGP"/>
    <property type="match status" value="1"/>
</dbReference>
<dbReference type="SUPFAM" id="SSF53448">
    <property type="entry name" value="Nucleotide-diphospho-sugar transferases"/>
    <property type="match status" value="1"/>
</dbReference>
<gene>
    <name type="ordered locus">SACOL2161</name>
</gene>
<feature type="chain" id="PRO_0000271309" description="Probable uridylyltransferase SACOL2161">
    <location>
        <begin position="1"/>
        <end position="395"/>
    </location>
</feature>
<feature type="binding site" evidence="1">
    <location>
        <begin position="99"/>
        <end position="102"/>
    </location>
    <ligand>
        <name>UTP</name>
        <dbReference type="ChEBI" id="CHEBI:46398"/>
    </ligand>
</feature>
<feature type="binding site" evidence="1">
    <location>
        <position position="113"/>
    </location>
    <ligand>
        <name>UTP</name>
        <dbReference type="ChEBI" id="CHEBI:46398"/>
    </ligand>
</feature>
<feature type="binding site" evidence="1">
    <location>
        <position position="178"/>
    </location>
    <ligand>
        <name>UTP</name>
        <dbReference type="ChEBI" id="CHEBI:46398"/>
    </ligand>
</feature>
<feature type="binding site" evidence="1">
    <location>
        <position position="204"/>
    </location>
    <ligand>
        <name>UTP</name>
        <dbReference type="ChEBI" id="CHEBI:46398"/>
    </ligand>
</feature>
<feature type="binding site" evidence="1">
    <location>
        <position position="235"/>
    </location>
    <ligand>
        <name>UTP</name>
        <dbReference type="ChEBI" id="CHEBI:46398"/>
    </ligand>
</feature>
<feature type="binding site" evidence="1">
    <location>
        <position position="344"/>
    </location>
    <ligand>
        <name>UTP</name>
        <dbReference type="ChEBI" id="CHEBI:46398"/>
    </ligand>
</feature>
<proteinExistence type="inferred from homology"/>
<reference key="1">
    <citation type="journal article" date="2005" name="J. Bacteriol.">
        <title>Insights on evolution of virulence and resistance from the complete genome analysis of an early methicillin-resistant Staphylococcus aureus strain and a biofilm-producing methicillin-resistant Staphylococcus epidermidis strain.</title>
        <authorList>
            <person name="Gill S.R."/>
            <person name="Fouts D.E."/>
            <person name="Archer G.L."/>
            <person name="Mongodin E.F."/>
            <person name="DeBoy R.T."/>
            <person name="Ravel J."/>
            <person name="Paulsen I.T."/>
            <person name="Kolonay J.F."/>
            <person name="Brinkac L.M."/>
            <person name="Beanan M.J."/>
            <person name="Dodson R.J."/>
            <person name="Daugherty S.C."/>
            <person name="Madupu R."/>
            <person name="Angiuoli S.V."/>
            <person name="Durkin A.S."/>
            <person name="Haft D.H."/>
            <person name="Vamathevan J.J."/>
            <person name="Khouri H."/>
            <person name="Utterback T.R."/>
            <person name="Lee C."/>
            <person name="Dimitrov G."/>
            <person name="Jiang L."/>
            <person name="Qin H."/>
            <person name="Weidman J."/>
            <person name="Tran K."/>
            <person name="Kang K.H."/>
            <person name="Hance I.R."/>
            <person name="Nelson K.E."/>
            <person name="Fraser C.M."/>
        </authorList>
    </citation>
    <scope>NUCLEOTIDE SEQUENCE [LARGE SCALE GENOMIC DNA]</scope>
    <source>
        <strain>COL</strain>
    </source>
</reference>